<evidence type="ECO:0000255" key="1">
    <source>
        <dbReference type="PROSITE-ProRule" id="PRU00303"/>
    </source>
</evidence>
<evidence type="ECO:0000305" key="2"/>
<feature type="signal peptide" evidence="1">
    <location>
        <begin position="1"/>
        <end position="19"/>
    </location>
</feature>
<feature type="chain" id="PRO_0000282194" description="Uncharacterized lipoprotein SE_0145">
    <location>
        <begin position="20"/>
        <end position="253"/>
    </location>
</feature>
<feature type="lipid moiety-binding region" description="N-palmitoyl cysteine" evidence="1">
    <location>
        <position position="20"/>
    </location>
</feature>
<feature type="lipid moiety-binding region" description="S-diacylglycerol cysteine" evidence="1">
    <location>
        <position position="20"/>
    </location>
</feature>
<name>Y145_STAES</name>
<comment type="subcellular location">
    <subcellularLocation>
        <location evidence="1">Cell membrane</location>
        <topology evidence="1">Lipid-anchor</topology>
    </subcellularLocation>
</comment>
<comment type="similarity">
    <text evidence="2">Belongs to the staphylococcal tandem lipoprotein family.</text>
</comment>
<protein>
    <recommendedName>
        <fullName>Uncharacterized lipoprotein SE_0145</fullName>
    </recommendedName>
</protein>
<accession>Q8CU18</accession>
<gene>
    <name type="ordered locus">SE_0145</name>
</gene>
<sequence>MRYLKRITIYISLLILVSGCGNSKEAEIKQNFNKTLSMYPIKNLENFYDKEGYRDEEFDKKDKGTWIVHSEMTIEPKGKSMETRGMVLYINRNTRTTKGYYFINEITDDSNGRPKDDEKRYPVKMEHNKIIPTKPIPNDKLKKEIENFKFFVQYANFKDINDYKNGDISYNPNVPSYSAKYQLNNNDYNVKQLRKRYDIPTKQAPKLLLKGDGDLKGSSVGSKNLEFTFVENKEENIFFTDAVQFTPSENDES</sequence>
<keyword id="KW-1003">Cell membrane</keyword>
<keyword id="KW-0449">Lipoprotein</keyword>
<keyword id="KW-0472">Membrane</keyword>
<keyword id="KW-0564">Palmitate</keyword>
<keyword id="KW-0732">Signal</keyword>
<reference key="1">
    <citation type="journal article" date="2003" name="Mol. Microbiol.">
        <title>Genome-based analysis of virulence genes in a non-biofilm-forming Staphylococcus epidermidis strain (ATCC 12228).</title>
        <authorList>
            <person name="Zhang Y.-Q."/>
            <person name="Ren S.-X."/>
            <person name="Li H.-L."/>
            <person name="Wang Y.-X."/>
            <person name="Fu G."/>
            <person name="Yang J."/>
            <person name="Qin Z.-Q."/>
            <person name="Miao Y.-G."/>
            <person name="Wang W.-Y."/>
            <person name="Chen R.-S."/>
            <person name="Shen Y."/>
            <person name="Chen Z."/>
            <person name="Yuan Z.-H."/>
            <person name="Zhao G.-P."/>
            <person name="Qu D."/>
            <person name="Danchin A."/>
            <person name="Wen Y.-M."/>
        </authorList>
    </citation>
    <scope>NUCLEOTIDE SEQUENCE [LARGE SCALE GENOMIC DNA]</scope>
    <source>
        <strain>ATCC 12228 / FDA PCI 1200</strain>
    </source>
</reference>
<proteinExistence type="inferred from homology"/>
<dbReference type="EMBL" id="AE015929">
    <property type="protein sequence ID" value="AAO03742.1"/>
    <property type="molecule type" value="Genomic_DNA"/>
</dbReference>
<dbReference type="RefSeq" id="NP_763700.1">
    <property type="nucleotide sequence ID" value="NC_004461.1"/>
</dbReference>
<dbReference type="RefSeq" id="WP_002437638.1">
    <property type="nucleotide sequence ID" value="NC_004461.1"/>
</dbReference>
<dbReference type="SMR" id="Q8CU18"/>
<dbReference type="KEGG" id="sep:SE_0145"/>
<dbReference type="PATRIC" id="fig|176280.10.peg.135"/>
<dbReference type="eggNOG" id="ENOG5033UD8">
    <property type="taxonomic scope" value="Bacteria"/>
</dbReference>
<dbReference type="HOGENOM" id="CLU_071589_0_0_9"/>
<dbReference type="OrthoDB" id="2189886at2"/>
<dbReference type="Proteomes" id="UP000001411">
    <property type="component" value="Chromosome"/>
</dbReference>
<dbReference type="GO" id="GO:0005886">
    <property type="term" value="C:plasma membrane"/>
    <property type="evidence" value="ECO:0007669"/>
    <property type="project" value="UniProtKB-SubCell"/>
</dbReference>
<dbReference type="Gene3D" id="2.50.20.40">
    <property type="match status" value="1"/>
</dbReference>
<dbReference type="InterPro" id="IPR007595">
    <property type="entry name" value="Csa"/>
</dbReference>
<dbReference type="InterPro" id="IPR038641">
    <property type="entry name" value="Csa_sf"/>
</dbReference>
<dbReference type="NCBIfam" id="TIGR01742">
    <property type="entry name" value="SA_tandem_lipo"/>
    <property type="match status" value="1"/>
</dbReference>
<dbReference type="Pfam" id="PF04507">
    <property type="entry name" value="DUF576"/>
    <property type="match status" value="1"/>
</dbReference>
<dbReference type="PROSITE" id="PS51257">
    <property type="entry name" value="PROKAR_LIPOPROTEIN"/>
    <property type="match status" value="1"/>
</dbReference>
<organism>
    <name type="scientific">Staphylococcus epidermidis (strain ATCC 12228 / FDA PCI 1200)</name>
    <dbReference type="NCBI Taxonomy" id="176280"/>
    <lineage>
        <taxon>Bacteria</taxon>
        <taxon>Bacillati</taxon>
        <taxon>Bacillota</taxon>
        <taxon>Bacilli</taxon>
        <taxon>Bacillales</taxon>
        <taxon>Staphylococcaceae</taxon>
        <taxon>Staphylococcus</taxon>
    </lineage>
</organism>